<organism>
    <name type="scientific">Salmonella enteritidis PT4 (strain P125109)</name>
    <dbReference type="NCBI Taxonomy" id="550537"/>
    <lineage>
        <taxon>Bacteria</taxon>
        <taxon>Pseudomonadati</taxon>
        <taxon>Pseudomonadota</taxon>
        <taxon>Gammaproteobacteria</taxon>
        <taxon>Enterobacterales</taxon>
        <taxon>Enterobacteriaceae</taxon>
        <taxon>Salmonella</taxon>
    </lineage>
</organism>
<comment type="function">
    <text evidence="1">Part of the MsrPQ system that repairs oxidized periplasmic proteins containing methionine sulfoxide residues (Met-O), using respiratory chain electrons. Thus protects these proteins from oxidative-stress damage caused by reactive species of oxygen and chlorine generated by the host defense mechanisms. MsrPQ is essential for the maintenance of envelope integrity under bleach stress, rescuing a wide series of structurally unrelated periplasmic proteins from methionine oxidation, including the primary periplasmic chaperone SurA and the lipoprotein Pal. The catalytic subunit MsrP is non-stereospecific, being able to reduce both (R-) and (S-) diastereoisomers of methionine sulfoxide.</text>
</comment>
<comment type="catalytic activity">
    <reaction evidence="1">
        <text>L-methionyl-[protein] + a quinone + H2O = L-methionyl-(S)-S-oxide-[protein] + a quinol</text>
        <dbReference type="Rhea" id="RHEA:51292"/>
        <dbReference type="Rhea" id="RHEA-COMP:12313"/>
        <dbReference type="Rhea" id="RHEA-COMP:12315"/>
        <dbReference type="ChEBI" id="CHEBI:15377"/>
        <dbReference type="ChEBI" id="CHEBI:16044"/>
        <dbReference type="ChEBI" id="CHEBI:24646"/>
        <dbReference type="ChEBI" id="CHEBI:44120"/>
        <dbReference type="ChEBI" id="CHEBI:132124"/>
    </reaction>
</comment>
<comment type="catalytic activity">
    <reaction evidence="1">
        <text>L-methionyl-[protein] + a quinone + H2O = L-methionyl-(R)-S-oxide-[protein] + a quinol</text>
        <dbReference type="Rhea" id="RHEA:51296"/>
        <dbReference type="Rhea" id="RHEA-COMP:12313"/>
        <dbReference type="Rhea" id="RHEA-COMP:12314"/>
        <dbReference type="ChEBI" id="CHEBI:15377"/>
        <dbReference type="ChEBI" id="CHEBI:16044"/>
        <dbReference type="ChEBI" id="CHEBI:24646"/>
        <dbReference type="ChEBI" id="CHEBI:45764"/>
        <dbReference type="ChEBI" id="CHEBI:132124"/>
    </reaction>
</comment>
<comment type="cofactor">
    <cofactor evidence="1">
        <name>Mo-molybdopterin</name>
        <dbReference type="ChEBI" id="CHEBI:71302"/>
    </cofactor>
    <text evidence="1">Binds 1 Mo-molybdopterin (Mo-MPT) cofactor per subunit.</text>
</comment>
<comment type="subunit">
    <text evidence="1">Heterodimer of a catalytic subunit (MsrP) and a heme-binding subunit (MsrQ).</text>
</comment>
<comment type="subcellular location">
    <subcellularLocation>
        <location evidence="1">Periplasm</location>
    </subcellularLocation>
    <text evidence="1">Is attached to the inner membrane when interacting with the MsrQ subunit.</text>
</comment>
<comment type="PTM">
    <text evidence="1">Predicted to be exported by the Tat system. The position of the signal peptide cleavage has not been experimentally proven.</text>
</comment>
<comment type="similarity">
    <text evidence="1">Belongs to the MsrP family.</text>
</comment>
<protein>
    <recommendedName>
        <fullName evidence="1">Protein-methionine-sulfoxide reductase catalytic subunit MsrP</fullName>
        <ecNumber evidence="1">1.8.5.-</ecNumber>
    </recommendedName>
</protein>
<keyword id="KW-0479">Metal-binding</keyword>
<keyword id="KW-0500">Molybdenum</keyword>
<keyword id="KW-0560">Oxidoreductase</keyword>
<keyword id="KW-0574">Periplasm</keyword>
<keyword id="KW-0732">Signal</keyword>
<evidence type="ECO:0000255" key="1">
    <source>
        <dbReference type="HAMAP-Rule" id="MF_01206"/>
    </source>
</evidence>
<feature type="signal peptide" description="Tat-type signal" evidence="1">
    <location>
        <begin position="1"/>
        <end position="44"/>
    </location>
</feature>
<feature type="chain" id="PRO_5000397660" description="Protein-methionine-sulfoxide reductase catalytic subunit MsrP" evidence="1">
    <location>
        <begin position="45"/>
        <end position="334"/>
    </location>
</feature>
<feature type="binding site" evidence="1">
    <location>
        <position position="88"/>
    </location>
    <ligand>
        <name>Mo-molybdopterin</name>
        <dbReference type="ChEBI" id="CHEBI:71302"/>
    </ligand>
</feature>
<feature type="binding site" evidence="1">
    <location>
        <begin position="91"/>
        <end position="92"/>
    </location>
    <ligand>
        <name>Mo-molybdopterin</name>
        <dbReference type="ChEBI" id="CHEBI:71302"/>
    </ligand>
</feature>
<feature type="binding site" evidence="1">
    <location>
        <position position="146"/>
    </location>
    <ligand>
        <name>Mo-molybdopterin</name>
        <dbReference type="ChEBI" id="CHEBI:71302"/>
    </ligand>
    <ligandPart>
        <name>Mo</name>
        <dbReference type="ChEBI" id="CHEBI:28685"/>
    </ligandPart>
</feature>
<feature type="binding site" evidence="1">
    <location>
        <position position="181"/>
    </location>
    <ligand>
        <name>Mo-molybdopterin</name>
        <dbReference type="ChEBI" id="CHEBI:71302"/>
    </ligand>
</feature>
<feature type="binding site" evidence="1">
    <location>
        <position position="233"/>
    </location>
    <ligand>
        <name>Mo-molybdopterin</name>
        <dbReference type="ChEBI" id="CHEBI:71302"/>
    </ligand>
</feature>
<feature type="binding site" evidence="1">
    <location>
        <position position="238"/>
    </location>
    <ligand>
        <name>Mo-molybdopterin</name>
        <dbReference type="ChEBI" id="CHEBI:71302"/>
    </ligand>
</feature>
<feature type="binding site" evidence="1">
    <location>
        <begin position="249"/>
        <end position="251"/>
    </location>
    <ligand>
        <name>Mo-molybdopterin</name>
        <dbReference type="ChEBI" id="CHEBI:71302"/>
    </ligand>
</feature>
<gene>
    <name evidence="1" type="primary">msrP</name>
    <name type="ordered locus">SEN3211</name>
</gene>
<accession>B5R1C0</accession>
<dbReference type="EC" id="1.8.5.-" evidence="1"/>
<dbReference type="EMBL" id="AM933172">
    <property type="protein sequence ID" value="CAR34786.1"/>
    <property type="molecule type" value="Genomic_DNA"/>
</dbReference>
<dbReference type="RefSeq" id="WP_000723872.1">
    <property type="nucleotide sequence ID" value="NC_011294.1"/>
</dbReference>
<dbReference type="SMR" id="B5R1C0"/>
<dbReference type="KEGG" id="set:SEN3211"/>
<dbReference type="HOGENOM" id="CLU_045520_0_0_6"/>
<dbReference type="Proteomes" id="UP000000613">
    <property type="component" value="Chromosome"/>
</dbReference>
<dbReference type="GO" id="GO:0042597">
    <property type="term" value="C:periplasmic space"/>
    <property type="evidence" value="ECO:0007669"/>
    <property type="project" value="UniProtKB-SubCell"/>
</dbReference>
<dbReference type="GO" id="GO:0046872">
    <property type="term" value="F:metal ion binding"/>
    <property type="evidence" value="ECO:0007669"/>
    <property type="project" value="UniProtKB-KW"/>
</dbReference>
<dbReference type="GO" id="GO:0043546">
    <property type="term" value="F:molybdopterin cofactor binding"/>
    <property type="evidence" value="ECO:0007669"/>
    <property type="project" value="UniProtKB-UniRule"/>
</dbReference>
<dbReference type="GO" id="GO:0016672">
    <property type="term" value="F:oxidoreductase activity, acting on a sulfur group of donors, quinone or similar compound as acceptor"/>
    <property type="evidence" value="ECO:0007669"/>
    <property type="project" value="UniProtKB-UniRule"/>
</dbReference>
<dbReference type="GO" id="GO:0030091">
    <property type="term" value="P:protein repair"/>
    <property type="evidence" value="ECO:0007669"/>
    <property type="project" value="UniProtKB-UniRule"/>
</dbReference>
<dbReference type="CDD" id="cd02107">
    <property type="entry name" value="YedY_like_Moco"/>
    <property type="match status" value="1"/>
</dbReference>
<dbReference type="FunFam" id="3.90.420.10:FF:000001">
    <property type="entry name" value="Protein-methionine-sulfoxide reductase catalytic subunit MsrP"/>
    <property type="match status" value="1"/>
</dbReference>
<dbReference type="Gene3D" id="3.90.420.10">
    <property type="entry name" value="Oxidoreductase, molybdopterin-binding domain"/>
    <property type="match status" value="1"/>
</dbReference>
<dbReference type="HAMAP" id="MF_01206">
    <property type="entry name" value="MsrP"/>
    <property type="match status" value="1"/>
</dbReference>
<dbReference type="InterPro" id="IPR022867">
    <property type="entry name" value="MsrP"/>
</dbReference>
<dbReference type="InterPro" id="IPR000572">
    <property type="entry name" value="OxRdtase_Mopterin-bd_dom"/>
</dbReference>
<dbReference type="InterPro" id="IPR036374">
    <property type="entry name" value="OxRdtase_Mopterin-bd_sf"/>
</dbReference>
<dbReference type="InterPro" id="IPR006311">
    <property type="entry name" value="TAT_signal"/>
</dbReference>
<dbReference type="NCBIfam" id="NF003767">
    <property type="entry name" value="PRK05363.1"/>
    <property type="match status" value="1"/>
</dbReference>
<dbReference type="PANTHER" id="PTHR43032">
    <property type="entry name" value="PROTEIN-METHIONINE-SULFOXIDE REDUCTASE"/>
    <property type="match status" value="1"/>
</dbReference>
<dbReference type="PANTHER" id="PTHR43032:SF3">
    <property type="entry name" value="PROTEIN-METHIONINE-SULFOXIDE REDUCTASE CATALYTIC SUBUNIT MSRP"/>
    <property type="match status" value="1"/>
</dbReference>
<dbReference type="Pfam" id="PF00174">
    <property type="entry name" value="Oxidored_molyb"/>
    <property type="match status" value="1"/>
</dbReference>
<dbReference type="SUPFAM" id="SSF56524">
    <property type="entry name" value="Oxidoreductase molybdopterin-binding domain"/>
    <property type="match status" value="1"/>
</dbReference>
<dbReference type="PROSITE" id="PS51318">
    <property type="entry name" value="TAT"/>
    <property type="match status" value="1"/>
</dbReference>
<reference key="1">
    <citation type="journal article" date="2008" name="Genome Res.">
        <title>Comparative genome analysis of Salmonella enteritidis PT4 and Salmonella gallinarum 287/91 provides insights into evolutionary and host adaptation pathways.</title>
        <authorList>
            <person name="Thomson N.R."/>
            <person name="Clayton D.J."/>
            <person name="Windhorst D."/>
            <person name="Vernikos G."/>
            <person name="Davidson S."/>
            <person name="Churcher C."/>
            <person name="Quail M.A."/>
            <person name="Stevens M."/>
            <person name="Jones M.A."/>
            <person name="Watson M."/>
            <person name="Barron A."/>
            <person name="Layton A."/>
            <person name="Pickard D."/>
            <person name="Kingsley R.A."/>
            <person name="Bignell A."/>
            <person name="Clark L."/>
            <person name="Harris B."/>
            <person name="Ormond D."/>
            <person name="Abdellah Z."/>
            <person name="Brooks K."/>
            <person name="Cherevach I."/>
            <person name="Chillingworth T."/>
            <person name="Woodward J."/>
            <person name="Norberczak H."/>
            <person name="Lord A."/>
            <person name="Arrowsmith C."/>
            <person name="Jagels K."/>
            <person name="Moule S."/>
            <person name="Mungall K."/>
            <person name="Saunders M."/>
            <person name="Whitehead S."/>
            <person name="Chabalgoity J.A."/>
            <person name="Maskell D."/>
            <person name="Humphreys T."/>
            <person name="Roberts M."/>
            <person name="Barrow P.A."/>
            <person name="Dougan G."/>
            <person name="Parkhill J."/>
        </authorList>
    </citation>
    <scope>NUCLEOTIDE SEQUENCE [LARGE SCALE GENOMIC DNA]</scope>
    <source>
        <strain>P125109</strain>
    </source>
</reference>
<sequence>MKKIRPLTEADVTAESAFFMQRRQVLKALGISAAALSLPSTAQADLFSWFKGNDRPKAPAGKPLEFSQPAAWRSDLALTPEDKVTGYNNFYEFGLDKADPAANAGSLKTEPWTLKISGEVAKPFTLDYDDLTHRFPLEERIYRMRCVEAWSMVVPWIGFPLYKLLAQAQPTSHAKYVAFETLYAPDDMPGQKDRFIGGGLKYPYVEGLRLDEAMHPLTLMTVGVYGKALPPQNGAPIRLIVPWKYGFKGIKSIVSIKLTRERPLTTWNLSAPNEYGFYANVNPHVDHPRWSQATERFIGSGGILDVQRQPTLLFNGYANEVASLYRGLNLRENF</sequence>
<name>MSRP_SALEP</name>
<proteinExistence type="inferred from homology"/>